<sequence>MTTATPLLSLQKPTPIALAEIEESLSQLWANQQHSGAGALVSRAATFSIVVYEPEEFQQILAALGLYHGHLDGLHGPMTRAAIAQAQTQFGLPSTGRPDSATFKALRQAYQALKHSPSLTNQDLRGAVLSNVIATQNPCRIVSLCPTLEGDRPISAEVSAYCPITSAKQASLICCEAVTLRGSQAEMEAIGTFVSELLLPGLPRYVWWKATPNPEQLLFQQLANSCNCMIFDSSYFSDPEAEFLRFQDLIDQETYIADLNWHRLAAWQELTAAAFDPPERRDGLLEVDQLVIDYEKGNPAQALMYMGWIASRLGWQPVSYRCEGGEYDLRQIEFRTEDDRMVKVELAGIPVGDPGLVLGDLIALRLTSENPDADCCTILCSETTGCMRMEAGGGAQSCRTEQVAPPSNETSESLLAMQMQRWGRDALYEESLAVIAVALRQRTHA</sequence>
<dbReference type="EMBL" id="U33285">
    <property type="protein sequence ID" value="AAA98848.1"/>
    <property type="molecule type" value="Genomic_DNA"/>
</dbReference>
<dbReference type="EMBL" id="CP000100">
    <property type="protein sequence ID" value="ABB58363.1"/>
    <property type="molecule type" value="Genomic_DNA"/>
</dbReference>
<dbReference type="RefSeq" id="WP_011244079.1">
    <property type="nucleotide sequence ID" value="NZ_JACJTX010000001.1"/>
</dbReference>
<dbReference type="SMR" id="Q54709"/>
<dbReference type="STRING" id="1140.Synpcc7942_2333"/>
<dbReference type="PaxDb" id="1140-Synpcc7942_2333"/>
<dbReference type="DNASU" id="3774616"/>
<dbReference type="GeneID" id="72431220"/>
<dbReference type="KEGG" id="syf:Synpcc7942_2333"/>
<dbReference type="eggNOG" id="COG3409">
    <property type="taxonomic scope" value="Bacteria"/>
</dbReference>
<dbReference type="eggNOG" id="COG3429">
    <property type="taxonomic scope" value="Bacteria"/>
</dbReference>
<dbReference type="HOGENOM" id="CLU_048410_0_0_3"/>
<dbReference type="OrthoDB" id="128564at2"/>
<dbReference type="BioCyc" id="SYNEL:SYNPCC7942_2333-MONOMER"/>
<dbReference type="Proteomes" id="UP000889800">
    <property type="component" value="Chromosome"/>
</dbReference>
<dbReference type="Gene3D" id="1.10.101.10">
    <property type="entry name" value="PGBD-like superfamily/PGBD"/>
    <property type="match status" value="1"/>
</dbReference>
<dbReference type="InterPro" id="IPR004555">
    <property type="entry name" value="G6PDH_assembly_OpcA"/>
</dbReference>
<dbReference type="InterPro" id="IPR046802">
    <property type="entry name" value="OpcA_G6PD_C"/>
</dbReference>
<dbReference type="InterPro" id="IPR046801">
    <property type="entry name" value="OpcA_G6PD_N"/>
</dbReference>
<dbReference type="InterPro" id="IPR002477">
    <property type="entry name" value="Peptidoglycan-bd-like"/>
</dbReference>
<dbReference type="InterPro" id="IPR036365">
    <property type="entry name" value="PGBD-like_sf"/>
</dbReference>
<dbReference type="InterPro" id="IPR036366">
    <property type="entry name" value="PGBDSf"/>
</dbReference>
<dbReference type="NCBIfam" id="TIGR00534">
    <property type="entry name" value="OpcA"/>
    <property type="match status" value="1"/>
</dbReference>
<dbReference type="PANTHER" id="PTHR38658">
    <property type="entry name" value="OXPP CYCLE PROTEIN OPCA-RELATED"/>
    <property type="match status" value="1"/>
</dbReference>
<dbReference type="PANTHER" id="PTHR38658:SF1">
    <property type="entry name" value="OXPP CYCLE PROTEIN OPCA-RELATED"/>
    <property type="match status" value="1"/>
</dbReference>
<dbReference type="Pfam" id="PF10128">
    <property type="entry name" value="OpcA_G6PD_assem"/>
    <property type="match status" value="1"/>
</dbReference>
<dbReference type="Pfam" id="PF20171">
    <property type="entry name" value="OpcA_G6PD_C"/>
    <property type="match status" value="1"/>
</dbReference>
<dbReference type="Pfam" id="PF01471">
    <property type="entry name" value="PG_binding_1"/>
    <property type="match status" value="1"/>
</dbReference>
<dbReference type="SUPFAM" id="SSF47090">
    <property type="entry name" value="PGBD-like"/>
    <property type="match status" value="1"/>
</dbReference>
<proteinExistence type="predicted"/>
<name>OPCA_SYNE7</name>
<comment type="function">
    <text>May be involved in the functional assembly of glucose 6-phosphate dehydrogenase.</text>
</comment>
<accession>Q54709</accession>
<accession>Q31KQ6</accession>
<keyword id="KW-1185">Reference proteome</keyword>
<organism>
    <name type="scientific">Synechococcus elongatus (strain ATCC 33912 / PCC 7942 / FACHB-805)</name>
    <name type="common">Anacystis nidulans R2</name>
    <dbReference type="NCBI Taxonomy" id="1140"/>
    <lineage>
        <taxon>Bacteria</taxon>
        <taxon>Bacillati</taxon>
        <taxon>Cyanobacteriota</taxon>
        <taxon>Cyanophyceae</taxon>
        <taxon>Synechococcales</taxon>
        <taxon>Synechococcaceae</taxon>
        <taxon>Synechococcus</taxon>
    </lineage>
</organism>
<reference key="1">
    <citation type="journal article" date="1995" name="FEMS Microbiol. Lett.">
        <title>A comparison of gene organization in the zwf region of the genomes of the cyanobacteria Synechococcus sp. PCC 7942 and Anabaena sp. PCC 7120.</title>
        <authorList>
            <person name="Newman J."/>
            <person name="Karakaya H."/>
            <person name="Scanlan D.J."/>
            <person name="Mann N.H."/>
        </authorList>
    </citation>
    <scope>NUCLEOTIDE SEQUENCE [GENOMIC DNA]</scope>
</reference>
<reference key="2">
    <citation type="submission" date="2005-08" db="EMBL/GenBank/DDBJ databases">
        <title>Complete sequence of chromosome 1 of Synechococcus elongatus PCC 7942.</title>
        <authorList>
            <consortium name="US DOE Joint Genome Institute"/>
            <person name="Copeland A."/>
            <person name="Lucas S."/>
            <person name="Lapidus A."/>
            <person name="Barry K."/>
            <person name="Detter J.C."/>
            <person name="Glavina T."/>
            <person name="Hammon N."/>
            <person name="Israni S."/>
            <person name="Pitluck S."/>
            <person name="Schmutz J."/>
            <person name="Larimer F."/>
            <person name="Land M."/>
            <person name="Kyrpides N."/>
            <person name="Lykidis A."/>
            <person name="Golden S."/>
            <person name="Richardson P."/>
        </authorList>
    </citation>
    <scope>NUCLEOTIDE SEQUENCE [LARGE SCALE GENOMIC DNA]</scope>
    <source>
        <strain>ATCC 33912 / PCC 7942 / FACHB-805</strain>
    </source>
</reference>
<protein>
    <recommendedName>
        <fullName>Putative OxPP cycle protein OpcA</fullName>
    </recommendedName>
</protein>
<gene>
    <name type="primary">opcA</name>
    <name type="ordered locus">Synpcc7942_2333</name>
</gene>
<feature type="chain" id="PRO_0000058058" description="Putative OxPP cycle protein OpcA">
    <location>
        <begin position="1"/>
        <end position="445"/>
    </location>
</feature>
<feature type="sequence conflict" description="In Ref. 1." evidence="1" ref="1">
    <original>RAAIAQAQTQFGLP</original>
    <variation>APRSPKPRHNSGS</variation>
    <location>
        <begin position="80"/>
        <end position="93"/>
    </location>
</feature>
<feature type="sequence conflict" description="In Ref. 1; AAA98848." evidence="1" ref="1">
    <original>A</original>
    <variation>R</variation>
    <location>
        <position position="177"/>
    </location>
</feature>
<evidence type="ECO:0000305" key="1"/>